<protein>
    <recommendedName>
        <fullName>Taffazin</fullName>
        <shortName>Taz</shortName>
        <ecNumber evidence="2">2.3.1.-</ecNumber>
    </recommendedName>
    <alternativeName>
        <fullName>1-acylglycerophosphocholine O-acyltransferase</fullName>
    </alternativeName>
</protein>
<comment type="function">
    <text evidence="1 2 4">Acyltransferase required to remodel newly synthesized phospholipid cardiolipin (1',3'-bis-[1,2-diacyl-sn-glycero-3-phospho]-glycerol or CL), a key component of the mitochondrial inner membrane, with tissue specific acyl chains necessary for adequate mitochondrial function (By similarity). Its role in cellular physiology is to improve mitochondrial performance (By similarity). CL is critical for the coassembly of lipids and proteins in mitochondrial membranes, for instance, remodeling of the acyl groups of CL in the mitochondrial inner membrane affects the assembly and stability of respiratory chain complex IV and its supercomplex forms (By similarity). Catalyzes the transacylation between phospholipids and lysophospholipids, with the highest rate being between phosphatidylcholine (1,2-diacyl-sn-glycero-3-phosphocholine or PC) and CL. Catalyzes both 1-acyl-sn-glycero-3-phosphocholine (lysophosphatidylcholine or LPC) reacylation and PC-CL transacylation, that means, it exchanges acyl groups between CL and PC by a combination of forward and reverse transacylations. Also catalyzes transacylations between other phospholipids such as phosphatidylethanolamine (1,2-diacyl-sn-glycero-3-phosphoethanolamine or PE) and CL, between PC and PE, and between PC and phosphatidate (1,2-diacyl-sn-glycero-3-phosphate or PA), although at lower rate. Not regiospecific, it transfers acyl groups into any of the sn-1 and sn-2 positions of the monolysocardiolipin (MLCL), which is an important prerequisite for uniformity and symmetry in CL acyl distribution. Cannot transacylate dilysocardiolipin (DLCL), thus, the role of MLCL is limited to that of an acyl acceptor. CoA-independent, it can reshuffle molecular species within a single phospholipid class. Redistributes fatty acids between MLCL, CL, and other lipids, which prolongs the half-life of CL. Its action is completely reversible, which allows for cyclic changes, such as fission and fusion or bending and flattening of the membrane. Hence, by contributing to the flexibility of the lipid composition, it plays an important role in the dynamics of mitochondria membranes (By similarity).</text>
</comment>
<comment type="catalytic activity">
    <reaction evidence="2">
        <text>a 1-acyl-sn-glycero-3-phosphate + a 1,2-diacyl-sn-glycero-3-phospho-(1'-sn-glycerol) = 1-acyl-sn-glycero-3-phospho-(1'-sn-glycerol) + a 1,2-diacyl-sn-glycero-3-phosphate</text>
        <dbReference type="Rhea" id="RHEA:67748"/>
        <dbReference type="ChEBI" id="CHEBI:57970"/>
        <dbReference type="ChEBI" id="CHEBI:58608"/>
        <dbReference type="ChEBI" id="CHEBI:64716"/>
        <dbReference type="ChEBI" id="CHEBI:64840"/>
    </reaction>
    <physiologicalReaction direction="left-to-right" evidence="2">
        <dbReference type="Rhea" id="RHEA:67749"/>
    </physiologicalReaction>
    <physiologicalReaction direction="right-to-left" evidence="2">
        <dbReference type="Rhea" id="RHEA:67750"/>
    </physiologicalReaction>
</comment>
<comment type="catalytic activity">
    <reaction evidence="2">
        <text>1-hexadecanoyl-2-(9Z,12Z-octadecadienoyl)-sn-glycero-3-phospho-(1'-sn-glycerol) + 1-(9Z-octadecenoyl)-sn-glycero-3-phosphate = 1-(9Z)-octadecenoyl-2-(9Z,12Z)-octadecadienoyl-sn-glycero-3-phosphate + 1-hexadecanoyl-sn-glycero-3-phospho-(1'-sn-glycerol)</text>
        <dbReference type="Rhea" id="RHEA:67752"/>
        <dbReference type="ChEBI" id="CHEBI:72840"/>
        <dbReference type="ChEBI" id="CHEBI:74544"/>
        <dbReference type="ChEBI" id="CHEBI:74563"/>
        <dbReference type="ChEBI" id="CHEBI:75158"/>
    </reaction>
    <physiologicalReaction direction="left-to-right" evidence="2">
        <dbReference type="Rhea" id="RHEA:67753"/>
    </physiologicalReaction>
    <physiologicalReaction direction="right-to-left" evidence="2">
        <dbReference type="Rhea" id="RHEA:67754"/>
    </physiologicalReaction>
</comment>
<comment type="catalytic activity">
    <reaction evidence="2">
        <text>1'-[1,2-diacyl-sn-glycero-3-phospho],3'-[1-acyl-sn-glycero-3-phospho]-glycerol + a 1,2-diacyl-sn-glycero-3-phosphocholine = a cardiolipin + a 1-acyl-sn-glycero-3-phosphocholine</text>
        <dbReference type="Rhea" id="RHEA:33731"/>
        <dbReference type="ChEBI" id="CHEBI:57643"/>
        <dbReference type="ChEBI" id="CHEBI:58168"/>
        <dbReference type="ChEBI" id="CHEBI:62237"/>
        <dbReference type="ChEBI" id="CHEBI:64743"/>
    </reaction>
    <physiologicalReaction direction="left-to-right" evidence="2">
        <dbReference type="Rhea" id="RHEA:33732"/>
    </physiologicalReaction>
    <physiologicalReaction direction="right-to-left" evidence="2">
        <dbReference type="Rhea" id="RHEA:33733"/>
    </physiologicalReaction>
</comment>
<comment type="catalytic activity">
    <reaction evidence="2">
        <text>1-hexadecanoyl-2-(9Z,12Z-octadecadienoyl)-sn-glycero-3-phosphocholine + 1-hexadecanoyl-sn-glycero-3-phosphocholine = 2-(9Z,12Z-octadecadienoyl)-sn-glycero-3-phosphocholine + 1,2-dihexadecanoyl-sn-glycero-3-phosphocholine</text>
        <dbReference type="Rhea" id="RHEA:68988"/>
        <dbReference type="ChEBI" id="CHEBI:72998"/>
        <dbReference type="ChEBI" id="CHEBI:72999"/>
        <dbReference type="ChEBI" id="CHEBI:73002"/>
        <dbReference type="ChEBI" id="CHEBI:76084"/>
    </reaction>
    <physiologicalReaction direction="left-to-right" evidence="2">
        <dbReference type="Rhea" id="RHEA:68989"/>
    </physiologicalReaction>
    <physiologicalReaction direction="right-to-left" evidence="2">
        <dbReference type="Rhea" id="RHEA:68990"/>
    </physiologicalReaction>
</comment>
<comment type="catalytic activity">
    <reaction evidence="2">
        <text>1,2-di-(9Z-octadecenoyl)-sn-glycero-3-phosphocholine + 1-hexadecanoyl-sn-glycero-3-phosphocholine = 1-hexadecanoyl-2-(9Z-octadecenoyl)-sn-glycero-3-phosphocholine + 1-(9Z-octadecenoyl)-sn-glycero-3-phosphocholine</text>
        <dbReference type="Rhea" id="RHEA:43816"/>
        <dbReference type="ChEBI" id="CHEBI:28610"/>
        <dbReference type="ChEBI" id="CHEBI:72998"/>
        <dbReference type="ChEBI" id="CHEBI:73001"/>
        <dbReference type="ChEBI" id="CHEBI:74669"/>
    </reaction>
    <physiologicalReaction direction="left-to-right" evidence="2">
        <dbReference type="Rhea" id="RHEA:43817"/>
    </physiologicalReaction>
    <physiologicalReaction direction="right-to-left" evidence="2">
        <dbReference type="Rhea" id="RHEA:43818"/>
    </physiologicalReaction>
</comment>
<comment type="pathway">
    <text evidence="2">Phospholipid metabolism.</text>
</comment>
<comment type="subcellular location">
    <subcellularLocation>
        <location evidence="2">Mitochondrion outer membrane</location>
        <topology evidence="2">Peripheral membrane protein</topology>
        <orientation evidence="2">Intermembrane side</orientation>
    </subcellularLocation>
    <subcellularLocation>
        <location evidence="2">Mitochondrion inner membrane</location>
        <topology evidence="2">Peripheral membrane protein</topology>
        <orientation evidence="2">Intermembrane side</orientation>
    </subcellularLocation>
</comment>
<comment type="domain">
    <text evidence="3">The HXXXXD motif is essential for acyltransferase activity.</text>
</comment>
<comment type="miscellaneous">
    <text evidence="2">The enzyme was named after a masochistic character Tafazzi, once popular on Italian television, apparently due to the difficulty encountered for its identification and characterization.</text>
</comment>
<comment type="similarity">
    <text evidence="6">Belongs to the taffazin family.</text>
</comment>
<evidence type="ECO:0000250" key="1">
    <source>
        <dbReference type="UniProtKB" id="Q06510"/>
    </source>
</evidence>
<evidence type="ECO:0000250" key="2">
    <source>
        <dbReference type="UniProtKB" id="Q16635"/>
    </source>
</evidence>
<evidence type="ECO:0000250" key="3">
    <source>
        <dbReference type="UniProtKB" id="Q3TFD2"/>
    </source>
</evidence>
<evidence type="ECO:0000250" key="4">
    <source>
        <dbReference type="UniProtKB" id="Q9V6G5"/>
    </source>
</evidence>
<evidence type="ECO:0000255" key="5"/>
<evidence type="ECO:0000305" key="6"/>
<reference key="1">
    <citation type="journal article" date="2005" name="Nature">
        <title>The genome of the social amoeba Dictyostelium discoideum.</title>
        <authorList>
            <person name="Eichinger L."/>
            <person name="Pachebat J.A."/>
            <person name="Gloeckner G."/>
            <person name="Rajandream M.A."/>
            <person name="Sucgang R."/>
            <person name="Berriman M."/>
            <person name="Song J."/>
            <person name="Olsen R."/>
            <person name="Szafranski K."/>
            <person name="Xu Q."/>
            <person name="Tunggal B."/>
            <person name="Kummerfeld S."/>
            <person name="Madera M."/>
            <person name="Konfortov B.A."/>
            <person name="Rivero F."/>
            <person name="Bankier A.T."/>
            <person name="Lehmann R."/>
            <person name="Hamlin N."/>
            <person name="Davies R."/>
            <person name="Gaudet P."/>
            <person name="Fey P."/>
            <person name="Pilcher K."/>
            <person name="Chen G."/>
            <person name="Saunders D."/>
            <person name="Sodergren E.J."/>
            <person name="Davis P."/>
            <person name="Kerhornou A."/>
            <person name="Nie X."/>
            <person name="Hall N."/>
            <person name="Anjard C."/>
            <person name="Hemphill L."/>
            <person name="Bason N."/>
            <person name="Farbrother P."/>
            <person name="Desany B."/>
            <person name="Just E."/>
            <person name="Morio T."/>
            <person name="Rost R."/>
            <person name="Churcher C.M."/>
            <person name="Cooper J."/>
            <person name="Haydock S."/>
            <person name="van Driessche N."/>
            <person name="Cronin A."/>
            <person name="Goodhead I."/>
            <person name="Muzny D.M."/>
            <person name="Mourier T."/>
            <person name="Pain A."/>
            <person name="Lu M."/>
            <person name="Harper D."/>
            <person name="Lindsay R."/>
            <person name="Hauser H."/>
            <person name="James K.D."/>
            <person name="Quiles M."/>
            <person name="Madan Babu M."/>
            <person name="Saito T."/>
            <person name="Buchrieser C."/>
            <person name="Wardroper A."/>
            <person name="Felder M."/>
            <person name="Thangavelu M."/>
            <person name="Johnson D."/>
            <person name="Knights A."/>
            <person name="Loulseged H."/>
            <person name="Mungall K.L."/>
            <person name="Oliver K."/>
            <person name="Price C."/>
            <person name="Quail M.A."/>
            <person name="Urushihara H."/>
            <person name="Hernandez J."/>
            <person name="Rabbinowitsch E."/>
            <person name="Steffen D."/>
            <person name="Sanders M."/>
            <person name="Ma J."/>
            <person name="Kohara Y."/>
            <person name="Sharp S."/>
            <person name="Simmonds M.N."/>
            <person name="Spiegler S."/>
            <person name="Tivey A."/>
            <person name="Sugano S."/>
            <person name="White B."/>
            <person name="Walker D."/>
            <person name="Woodward J.R."/>
            <person name="Winckler T."/>
            <person name="Tanaka Y."/>
            <person name="Shaulsky G."/>
            <person name="Schleicher M."/>
            <person name="Weinstock G.M."/>
            <person name="Rosenthal A."/>
            <person name="Cox E.C."/>
            <person name="Chisholm R.L."/>
            <person name="Gibbs R.A."/>
            <person name="Loomis W.F."/>
            <person name="Platzer M."/>
            <person name="Kay R.R."/>
            <person name="Williams J.G."/>
            <person name="Dear P.H."/>
            <person name="Noegel A.A."/>
            <person name="Barrell B.G."/>
            <person name="Kuspa A."/>
        </authorList>
    </citation>
    <scope>NUCLEOTIDE SEQUENCE [LARGE SCALE GENOMIC DNA]</scope>
    <source>
        <strain>AX4</strain>
    </source>
</reference>
<name>TAZ_DICDI</name>
<feature type="chain" id="PRO_0000328231" description="Taffazin">
    <location>
        <begin position="1"/>
        <end position="285"/>
    </location>
</feature>
<feature type="topological domain" description="Mitochondrial intermembrane" evidence="2">
    <location>
        <begin position="1"/>
        <end position="23"/>
    </location>
</feature>
<feature type="intramembrane region" evidence="5">
    <location>
        <begin position="24"/>
        <end position="42"/>
    </location>
</feature>
<feature type="topological domain" description="Mitochondrial intermembrane" evidence="2">
    <location>
        <begin position="43"/>
        <end position="285"/>
    </location>
</feature>
<feature type="short sequence motif" description="HXXXXD motif" evidence="3">
    <location>
        <begin position="74"/>
        <end position="79"/>
    </location>
</feature>
<proteinExistence type="inferred from homology"/>
<accession>Q54DX7</accession>
<gene>
    <name type="primary">taz</name>
    <name type="ORF">DDB_G0291922</name>
</gene>
<keyword id="KW-0012">Acyltransferase</keyword>
<keyword id="KW-0443">Lipid metabolism</keyword>
<keyword id="KW-0472">Membrane</keyword>
<keyword id="KW-0496">Mitochondrion</keyword>
<keyword id="KW-0999">Mitochondrion inner membrane</keyword>
<keyword id="KW-1000">Mitochondrion outer membrane</keyword>
<keyword id="KW-1185">Reference proteome</keyword>
<keyword id="KW-0808">Transferase</keyword>
<sequence length="285" mass="32784">MDSNNSNNNNKNLKQICDIPKPQFLSKGVFTLVGVLCKFWISMNTVTTSGIDKLVNEIDKTHQLKRPMITIANHSSNLDDPLLWGVLPNRILMDPSKQRWTLGASNILFTNWFYSKFFSLGKCIKIVRGDGIYQDGMNESIDRLSEGQWLHIFPEGRISQQTQLLYFKWGLGRLVGECYRRTGVVPLVVPIYHQGMEKSMPLAKLPIPRVGINLDIKVGDNIYCDQVISKYIDDNKISDLTDYLSQDDKKRKDFYKTITLHIEDEYQKIIPPTNRGRFSHPTIKD</sequence>
<dbReference type="EC" id="2.3.1.-" evidence="2"/>
<dbReference type="EMBL" id="AAFI02000186">
    <property type="protein sequence ID" value="EAL61491.1"/>
    <property type="molecule type" value="Genomic_DNA"/>
</dbReference>
<dbReference type="RefSeq" id="XP_629919.1">
    <property type="nucleotide sequence ID" value="XM_629917.1"/>
</dbReference>
<dbReference type="SMR" id="Q54DX7"/>
<dbReference type="FunCoup" id="Q54DX7">
    <property type="interactions" value="249"/>
</dbReference>
<dbReference type="STRING" id="44689.Q54DX7"/>
<dbReference type="PaxDb" id="44689-DDB0237792"/>
<dbReference type="EnsemblProtists" id="EAL61491">
    <property type="protein sequence ID" value="EAL61491"/>
    <property type="gene ID" value="DDB_G0291922"/>
</dbReference>
<dbReference type="GeneID" id="8628420"/>
<dbReference type="KEGG" id="ddi:DDB_G0291922"/>
<dbReference type="dictyBase" id="DDB_G0291922">
    <property type="gene designation" value="taz"/>
</dbReference>
<dbReference type="VEuPathDB" id="AmoebaDB:DDB_G0291922"/>
<dbReference type="eggNOG" id="KOG2847">
    <property type="taxonomic scope" value="Eukaryota"/>
</dbReference>
<dbReference type="HOGENOM" id="CLU_046747_3_0_1"/>
<dbReference type="InParanoid" id="Q54DX7"/>
<dbReference type="OMA" id="WHTLFFS"/>
<dbReference type="PhylomeDB" id="Q54DX7"/>
<dbReference type="Reactome" id="R-DDI-1268020">
    <property type="pathway name" value="Mitochondrial protein import"/>
</dbReference>
<dbReference type="Reactome" id="R-DDI-1482798">
    <property type="pathway name" value="Acyl chain remodeling of CL"/>
</dbReference>
<dbReference type="PRO" id="PR:Q54DX7"/>
<dbReference type="Proteomes" id="UP000002195">
    <property type="component" value="Chromosome 6"/>
</dbReference>
<dbReference type="GO" id="GO:0005743">
    <property type="term" value="C:mitochondrial inner membrane"/>
    <property type="evidence" value="ECO:0007669"/>
    <property type="project" value="UniProtKB-SubCell"/>
</dbReference>
<dbReference type="GO" id="GO:0031966">
    <property type="term" value="C:mitochondrial membrane"/>
    <property type="evidence" value="ECO:0000318"/>
    <property type="project" value="GO_Central"/>
</dbReference>
<dbReference type="GO" id="GO:0005741">
    <property type="term" value="C:mitochondrial outer membrane"/>
    <property type="evidence" value="ECO:0007669"/>
    <property type="project" value="UniProtKB-SubCell"/>
</dbReference>
<dbReference type="GO" id="GO:0005739">
    <property type="term" value="C:mitochondrion"/>
    <property type="evidence" value="ECO:0000250"/>
    <property type="project" value="dictyBase"/>
</dbReference>
<dbReference type="GO" id="GO:0047184">
    <property type="term" value="F:1-acylglycerophosphocholine O-acyltransferase activity"/>
    <property type="evidence" value="ECO:0000318"/>
    <property type="project" value="GO_Central"/>
</dbReference>
<dbReference type="GO" id="GO:0035965">
    <property type="term" value="P:cardiolipin acyl-chain remodeling"/>
    <property type="evidence" value="ECO:0000250"/>
    <property type="project" value="UniProtKB"/>
</dbReference>
<dbReference type="GO" id="GO:0007007">
    <property type="term" value="P:inner mitochondrial membrane organization"/>
    <property type="evidence" value="ECO:0000318"/>
    <property type="project" value="GO_Central"/>
</dbReference>
<dbReference type="CDD" id="cd07989">
    <property type="entry name" value="LPLAT_AGPAT-like"/>
    <property type="match status" value="1"/>
</dbReference>
<dbReference type="InterPro" id="IPR002123">
    <property type="entry name" value="Plipid/glycerol_acylTrfase"/>
</dbReference>
<dbReference type="InterPro" id="IPR000872">
    <property type="entry name" value="Tafazzin"/>
</dbReference>
<dbReference type="PANTHER" id="PTHR12497:SF0">
    <property type="entry name" value="TAFAZZIN"/>
    <property type="match status" value="1"/>
</dbReference>
<dbReference type="PANTHER" id="PTHR12497">
    <property type="entry name" value="TAZ PROTEIN TAFAZZIN"/>
    <property type="match status" value="1"/>
</dbReference>
<dbReference type="Pfam" id="PF01553">
    <property type="entry name" value="Acyltransferase"/>
    <property type="match status" value="1"/>
</dbReference>
<dbReference type="PRINTS" id="PR00979">
    <property type="entry name" value="TAFAZZIN"/>
</dbReference>
<dbReference type="SMART" id="SM00563">
    <property type="entry name" value="PlsC"/>
    <property type="match status" value="1"/>
</dbReference>
<dbReference type="SUPFAM" id="SSF69593">
    <property type="entry name" value="Glycerol-3-phosphate (1)-acyltransferase"/>
    <property type="match status" value="1"/>
</dbReference>
<organism>
    <name type="scientific">Dictyostelium discoideum</name>
    <name type="common">Social amoeba</name>
    <dbReference type="NCBI Taxonomy" id="44689"/>
    <lineage>
        <taxon>Eukaryota</taxon>
        <taxon>Amoebozoa</taxon>
        <taxon>Evosea</taxon>
        <taxon>Eumycetozoa</taxon>
        <taxon>Dictyostelia</taxon>
        <taxon>Dictyosteliales</taxon>
        <taxon>Dictyosteliaceae</taxon>
        <taxon>Dictyostelium</taxon>
    </lineage>
</organism>